<gene>
    <name type="primary">Lztfl1</name>
</gene>
<organism>
    <name type="scientific">Rattus norvegicus</name>
    <name type="common">Rat</name>
    <dbReference type="NCBI Taxonomy" id="10116"/>
    <lineage>
        <taxon>Eukaryota</taxon>
        <taxon>Metazoa</taxon>
        <taxon>Chordata</taxon>
        <taxon>Craniata</taxon>
        <taxon>Vertebrata</taxon>
        <taxon>Euteleostomi</taxon>
        <taxon>Mammalia</taxon>
        <taxon>Eutheria</taxon>
        <taxon>Euarchontoglires</taxon>
        <taxon>Glires</taxon>
        <taxon>Rodentia</taxon>
        <taxon>Myomorpha</taxon>
        <taxon>Muroidea</taxon>
        <taxon>Muridae</taxon>
        <taxon>Murinae</taxon>
        <taxon>Rattus</taxon>
    </lineage>
</organism>
<feature type="chain" id="PRO_0000318762" description="Leucine zipper transcription factor-like protein 1">
    <location>
        <begin position="1"/>
        <end position="299"/>
    </location>
</feature>
<feature type="region of interest" description="Interaction with BSS9" evidence="1">
    <location>
        <begin position="145"/>
        <end position="299"/>
    </location>
</feature>
<feature type="coiled-coil region" evidence="2">
    <location>
        <begin position="145"/>
        <end position="299"/>
    </location>
</feature>
<proteinExistence type="evidence at transcript level"/>
<keyword id="KW-0175">Coiled coil</keyword>
<keyword id="KW-0963">Cytoplasm</keyword>
<keyword id="KW-1185">Reference proteome</keyword>
<dbReference type="EMBL" id="BC092585">
    <property type="protein sequence ID" value="AAH92585.1"/>
    <property type="molecule type" value="mRNA"/>
</dbReference>
<dbReference type="RefSeq" id="NP_001019437.1">
    <property type="nucleotide sequence ID" value="NM_001024266.1"/>
</dbReference>
<dbReference type="RefSeq" id="XP_006244253.1">
    <property type="nucleotide sequence ID" value="XM_006244191.3"/>
</dbReference>
<dbReference type="SMR" id="Q562C6"/>
<dbReference type="FunCoup" id="Q562C6">
    <property type="interactions" value="2191"/>
</dbReference>
<dbReference type="STRING" id="10116.ENSRNOP00000008254"/>
<dbReference type="iPTMnet" id="Q562C6"/>
<dbReference type="PhosphoSitePlus" id="Q562C6"/>
<dbReference type="PaxDb" id="10116-ENSRNOP00000008254"/>
<dbReference type="Ensembl" id="ENSRNOT00000091431.2">
    <property type="protein sequence ID" value="ENSRNOP00000071325.1"/>
    <property type="gene ID" value="ENSRNOG00000006244.8"/>
</dbReference>
<dbReference type="GeneID" id="316102"/>
<dbReference type="KEGG" id="rno:316102"/>
<dbReference type="UCSC" id="RGD:1306628">
    <property type="organism name" value="rat"/>
</dbReference>
<dbReference type="AGR" id="RGD:1306628"/>
<dbReference type="CTD" id="54585"/>
<dbReference type="RGD" id="1306628">
    <property type="gene designation" value="Lztfl1"/>
</dbReference>
<dbReference type="eggNOG" id="ENOG502QRGB">
    <property type="taxonomic scope" value="Eukaryota"/>
</dbReference>
<dbReference type="GeneTree" id="ENSGT00390000016415"/>
<dbReference type="HOGENOM" id="CLU_083519_0_0_1"/>
<dbReference type="InParanoid" id="Q562C6"/>
<dbReference type="OMA" id="QMEGTTA"/>
<dbReference type="OrthoDB" id="313412at2759"/>
<dbReference type="PhylomeDB" id="Q562C6"/>
<dbReference type="TreeFam" id="TF329023"/>
<dbReference type="Reactome" id="R-RNO-5620922">
    <property type="pathway name" value="BBSome-mediated cargo-targeting to cilium"/>
</dbReference>
<dbReference type="PRO" id="PR:Q562C6"/>
<dbReference type="Proteomes" id="UP000002494">
    <property type="component" value="Chromosome 8"/>
</dbReference>
<dbReference type="Bgee" id="ENSRNOG00000006244">
    <property type="expression patterns" value="Expressed in testis and 20 other cell types or tissues"/>
</dbReference>
<dbReference type="GO" id="GO:0005929">
    <property type="term" value="C:cilium"/>
    <property type="evidence" value="ECO:0000266"/>
    <property type="project" value="RGD"/>
</dbReference>
<dbReference type="GO" id="GO:0005737">
    <property type="term" value="C:cytoplasm"/>
    <property type="evidence" value="ECO:0000266"/>
    <property type="project" value="RGD"/>
</dbReference>
<dbReference type="GO" id="GO:0005829">
    <property type="term" value="C:cytosol"/>
    <property type="evidence" value="ECO:0007669"/>
    <property type="project" value="Ensembl"/>
</dbReference>
<dbReference type="GO" id="GO:0002177">
    <property type="term" value="C:manchette"/>
    <property type="evidence" value="ECO:0000266"/>
    <property type="project" value="RGD"/>
</dbReference>
<dbReference type="GO" id="GO:0042802">
    <property type="term" value="F:identical protein binding"/>
    <property type="evidence" value="ECO:0000266"/>
    <property type="project" value="RGD"/>
</dbReference>
<dbReference type="GO" id="GO:0044877">
    <property type="term" value="F:protein-containing complex binding"/>
    <property type="evidence" value="ECO:0000266"/>
    <property type="project" value="RGD"/>
</dbReference>
<dbReference type="GO" id="GO:0030317">
    <property type="term" value="P:flagellated sperm motility"/>
    <property type="evidence" value="ECO:0000266"/>
    <property type="project" value="RGD"/>
</dbReference>
<dbReference type="GO" id="GO:1903568">
    <property type="term" value="P:negative regulation of protein localization to ciliary membrane"/>
    <property type="evidence" value="ECO:0000266"/>
    <property type="project" value="RGD"/>
</dbReference>
<dbReference type="GO" id="GO:1903565">
    <property type="term" value="P:negative regulation of protein localization to cilium"/>
    <property type="evidence" value="ECO:0000266"/>
    <property type="project" value="RGD"/>
</dbReference>
<dbReference type="GO" id="GO:0007283">
    <property type="term" value="P:spermatogenesis"/>
    <property type="evidence" value="ECO:0000266"/>
    <property type="project" value="RGD"/>
</dbReference>
<dbReference type="InterPro" id="IPR026157">
    <property type="entry name" value="LZTFL1"/>
</dbReference>
<dbReference type="PANTHER" id="PTHR21635">
    <property type="entry name" value="LEUCINE ZIPPER TRANSCRIPTION FACTOR LIKE"/>
    <property type="match status" value="1"/>
</dbReference>
<dbReference type="PANTHER" id="PTHR21635:SF0">
    <property type="entry name" value="LEUCINE ZIPPER TRANSCRIPTION FACTOR-LIKE PROTEIN 1"/>
    <property type="match status" value="1"/>
</dbReference>
<dbReference type="Pfam" id="PF15294">
    <property type="entry name" value="Leu_zip"/>
    <property type="match status" value="1"/>
</dbReference>
<protein>
    <recommendedName>
        <fullName>Leucine zipper transcription factor-like protein 1</fullName>
    </recommendedName>
</protein>
<accession>Q562C6</accession>
<comment type="function">
    <text evidence="1">Regulates ciliary localization of the BBSome complex. Together with the BBSome complex, controls SMO ciliary trafficking and contributes to the sonic hedgehog (SHH) pathway regulation. May play a role in neurite outgrowth. May have tumor suppressor function (By similarity).</text>
</comment>
<comment type="subunit">
    <text evidence="1">Self-associates. Interacts with BBS9; the interaction mediates the association of LZTL1 with the BBsome complex and regulates BBSome ciliary trafficking (By similarity).</text>
</comment>
<comment type="subcellular location">
    <subcellularLocation>
        <location evidence="1">Cytoplasm</location>
    </subcellularLocation>
</comment>
<comment type="similarity">
    <text evidence="3">Belongs to the LZTFL1 family.</text>
</comment>
<name>LZTL1_RAT</name>
<evidence type="ECO:0000250" key="1"/>
<evidence type="ECO:0000255" key="2"/>
<evidence type="ECO:0000305" key="3"/>
<reference key="1">
    <citation type="journal article" date="2004" name="Genome Res.">
        <title>The status, quality, and expansion of the NIH full-length cDNA project: the Mammalian Gene Collection (MGC).</title>
        <authorList>
            <consortium name="The MGC Project Team"/>
        </authorList>
    </citation>
    <scope>NUCLEOTIDE SEQUENCE [LARGE SCALE MRNA]</scope>
    <source>
        <tissue>Kidney</tissue>
    </source>
</reference>
<sequence>MAELGLNEHHQNEVINYMRFARSKRGLRLKTVDSCFQDLKESRLVEETFTIDEVSEVLNGLQAVVHSEVESELINTAHTNVLLLRQLFSQAEKWYLKLQTDVSELENRELLEQVAEFEKAEFASSNKKPIIDITKPKLVPINEGGTTELLNKEILRLQQENEKLKSRLKTIETQAVNALDEKSKLERVLQDLQLDQGNQQDFIKAQDLDDLENTVAALKSEFQKTLNDKTENQKSLEENLAAAKHDLLRVQEQLSMAEKELEKKFQQTAAYRNMKEILTKKNDQIKDLRKRLAKYESED</sequence>